<sequence length="817" mass="94915">MYSKNIIYFNKAFDKIEIKNLINWFLINYGNIKTTKLLDKIKKFGLIHATNAGISIGLNDLIIPPSKKNLVEISNKNLNKINKKFKNGKINLITYLIKEKRTWDNMNENLKIESIKNLKQNDLLNSLYTMTLSGARGNINQVKQLISMRGLISDSQGNLLNLPIKTNFKEGLNIVEYFISCYGARKGIIDTSLKTANAGYLTRRLIFASQNTIIRKTNCFTKYKKKIKIKYETKQEFKLLKEELIGRINVKTIKEKDNNKIIISYGQDICYTFKKILNHNINIYIRTPLNCILTTGICQMCYGWNLATGKIVELGETIGTIAAQSIGEPGTQLTMRTFHLGGIFTSKIKESILSPFTGKIWYDLNKNGKKTYNKFNEKIFLTSKEKKITIYENNINKSIYYLPPNSYIFVRPGEKVFKAQIIAETFDKQKKKENTKFNEVKKIKSNISGKKYINKKNKKFNNLYWILNANFITFNKFYHKLTDKLNFKKKSYTISKNMQDKNKKSKKNLQLKISIKNILNNMEKKKSKTNKKFIFINEILNKNKTIILNKPKKEKIINNKWKIGKFILKDEITNKNRNLYPSQIIQEKKDTSVLKKVTPYRLNDKILDKNPYIMKKNALLYKAVTKKEKNKDIIQGLVEIEKLFEAKKSFIIDKTKNLHEILKDLFVNYNKKYNNSTSTRKSIEIIQKYILEEIQSIYKEQGINISNKHIEIIIKQMTSKVIIKNAGNSPFIVGEICNINSIDNLNKNYEHKIIYEPILLGITKSSLYTQSFISQITFQESIKSLIKAAIENKIDWLYGLKENLILGNLIPIGTGFK</sequence>
<gene>
    <name type="primary">rpoC2</name>
</gene>
<geneLocation type="non-photosynthetic plastid"/>
<name>RPOC2_EUGLO</name>
<comment type="function">
    <text>DNA-dependent RNA polymerase catalyzes the transcription of DNA into RNA using the four ribonucleoside triphosphates as substrates.</text>
</comment>
<comment type="catalytic activity">
    <reaction evidence="2">
        <text>RNA(n) + a ribonucleoside 5'-triphosphate = RNA(n+1) + diphosphate</text>
        <dbReference type="Rhea" id="RHEA:21248"/>
        <dbReference type="Rhea" id="RHEA-COMP:14527"/>
        <dbReference type="Rhea" id="RHEA-COMP:17342"/>
        <dbReference type="ChEBI" id="CHEBI:33019"/>
        <dbReference type="ChEBI" id="CHEBI:61557"/>
        <dbReference type="ChEBI" id="CHEBI:140395"/>
        <dbReference type="EC" id="2.7.7.6"/>
    </reaction>
</comment>
<comment type="cofactor">
    <cofactor evidence="2">
        <name>Zn(2+)</name>
        <dbReference type="ChEBI" id="CHEBI:29105"/>
    </cofactor>
    <text evidence="2">Binds 1 Zn(2+) ion per subunit.</text>
</comment>
<comment type="subunit">
    <text evidence="1">In plastids the minimal PEP RNA polymerase catalytic core is composed of four subunits: alpha, beta, beta', and beta''. When a (nuclear-encoded) sigma factor is associated with the core the holoenzyme is formed, which can initiate transcription (By similarity).</text>
</comment>
<comment type="subcellular location">
    <subcellularLocation>
        <location>Plastid</location>
    </subcellularLocation>
</comment>
<comment type="similarity">
    <text evidence="3">Belongs to the RNA polymerase beta' chain family. RpoC2 subfamily.</text>
</comment>
<organism>
    <name type="scientific">Euglena longa</name>
    <name type="common">Euglenophycean alga</name>
    <name type="synonym">Astasia longa</name>
    <dbReference type="NCBI Taxonomy" id="3037"/>
    <lineage>
        <taxon>Eukaryota</taxon>
        <taxon>Discoba</taxon>
        <taxon>Euglenozoa</taxon>
        <taxon>Euglenida</taxon>
        <taxon>Spirocuta</taxon>
        <taxon>Euglenophyceae</taxon>
        <taxon>Euglenales</taxon>
        <taxon>Euglenaceae</taxon>
        <taxon>Euglena</taxon>
    </lineage>
</organism>
<feature type="chain" id="PRO_0000067915" description="DNA-directed RNA polymerase subunit beta''">
    <location>
        <begin position="1"/>
        <end position="817"/>
    </location>
</feature>
<feature type="binding site" evidence="2">
    <location>
        <position position="219"/>
    </location>
    <ligand>
        <name>Zn(2+)</name>
        <dbReference type="ChEBI" id="CHEBI:29105"/>
    </ligand>
</feature>
<feature type="binding site" evidence="2">
    <location>
        <position position="291"/>
    </location>
    <ligand>
        <name>Zn(2+)</name>
        <dbReference type="ChEBI" id="CHEBI:29105"/>
    </ligand>
</feature>
<feature type="binding site" evidence="2">
    <location>
        <position position="298"/>
    </location>
    <ligand>
        <name>Zn(2+)</name>
        <dbReference type="ChEBI" id="CHEBI:29105"/>
    </ligand>
</feature>
<feature type="binding site" evidence="2">
    <location>
        <position position="301"/>
    </location>
    <ligand>
        <name>Zn(2+)</name>
        <dbReference type="ChEBI" id="CHEBI:29105"/>
    </ligand>
</feature>
<evidence type="ECO:0000250" key="1"/>
<evidence type="ECO:0000250" key="2">
    <source>
        <dbReference type="UniProtKB" id="P0A8T7"/>
    </source>
</evidence>
<evidence type="ECO:0000305" key="3"/>
<reference key="1">
    <citation type="journal article" date="2000" name="Protist">
        <title>Complete gene map of the plastid genome of the nonphotosynthetic euglenoid flagellate Astasia longa.</title>
        <authorList>
            <person name="Gockel G."/>
            <person name="Hachtel W."/>
        </authorList>
    </citation>
    <scope>NUCLEOTIDE SEQUENCE [LARGE SCALE GENOMIC DNA]</scope>
    <source>
        <strain>CCAP 1204-17a</strain>
    </source>
</reference>
<keyword id="KW-0240">DNA-directed RNA polymerase</keyword>
<keyword id="KW-0479">Metal-binding</keyword>
<keyword id="KW-0548">Nucleotidyltransferase</keyword>
<keyword id="KW-0934">Plastid</keyword>
<keyword id="KW-0804">Transcription</keyword>
<keyword id="KW-0808">Transferase</keyword>
<keyword id="KW-0862">Zinc</keyword>
<dbReference type="EC" id="2.7.7.6"/>
<dbReference type="EMBL" id="AJ294725">
    <property type="protein sequence ID" value="CAC24617.1"/>
    <property type="molecule type" value="Genomic_DNA"/>
</dbReference>
<dbReference type="RefSeq" id="NP_075006.1">
    <property type="nucleotide sequence ID" value="NC_002652.1"/>
</dbReference>
<dbReference type="GeneID" id="802544"/>
<dbReference type="GO" id="GO:0000428">
    <property type="term" value="C:DNA-directed RNA polymerase complex"/>
    <property type="evidence" value="ECO:0007669"/>
    <property type="project" value="UniProtKB-KW"/>
</dbReference>
<dbReference type="GO" id="GO:0005739">
    <property type="term" value="C:mitochondrion"/>
    <property type="evidence" value="ECO:0007669"/>
    <property type="project" value="GOC"/>
</dbReference>
<dbReference type="GO" id="GO:0009536">
    <property type="term" value="C:plastid"/>
    <property type="evidence" value="ECO:0007669"/>
    <property type="project" value="UniProtKB-SubCell"/>
</dbReference>
<dbReference type="GO" id="GO:0003677">
    <property type="term" value="F:DNA binding"/>
    <property type="evidence" value="ECO:0007669"/>
    <property type="project" value="InterPro"/>
</dbReference>
<dbReference type="GO" id="GO:0003899">
    <property type="term" value="F:DNA-directed RNA polymerase activity"/>
    <property type="evidence" value="ECO:0007669"/>
    <property type="project" value="UniProtKB-EC"/>
</dbReference>
<dbReference type="GO" id="GO:0046872">
    <property type="term" value="F:metal ion binding"/>
    <property type="evidence" value="ECO:0007669"/>
    <property type="project" value="UniProtKB-KW"/>
</dbReference>
<dbReference type="GO" id="GO:0006351">
    <property type="term" value="P:DNA-templated transcription"/>
    <property type="evidence" value="ECO:0007669"/>
    <property type="project" value="InterPro"/>
</dbReference>
<dbReference type="CDD" id="cd02655">
    <property type="entry name" value="RNAP_beta'_C"/>
    <property type="match status" value="1"/>
</dbReference>
<dbReference type="Gene3D" id="1.10.132.30">
    <property type="match status" value="1"/>
</dbReference>
<dbReference type="Gene3D" id="1.10.150.390">
    <property type="match status" value="1"/>
</dbReference>
<dbReference type="Gene3D" id="1.10.1790.20">
    <property type="match status" value="1"/>
</dbReference>
<dbReference type="Gene3D" id="1.10.274.100">
    <property type="entry name" value="RNA polymerase Rpb1, domain 3"/>
    <property type="match status" value="1"/>
</dbReference>
<dbReference type="InterPro" id="IPR045867">
    <property type="entry name" value="DNA-dir_RpoC_beta_prime"/>
</dbReference>
<dbReference type="InterPro" id="IPR042102">
    <property type="entry name" value="RNA_pol_Rpb1_3_sf"/>
</dbReference>
<dbReference type="InterPro" id="IPR007083">
    <property type="entry name" value="RNA_pol_Rpb1_4"/>
</dbReference>
<dbReference type="InterPro" id="IPR007081">
    <property type="entry name" value="RNA_pol_Rpb1_5"/>
</dbReference>
<dbReference type="InterPro" id="IPR038120">
    <property type="entry name" value="Rpb1_funnel_sf"/>
</dbReference>
<dbReference type="PANTHER" id="PTHR19376">
    <property type="entry name" value="DNA-DIRECTED RNA POLYMERASE"/>
    <property type="match status" value="1"/>
</dbReference>
<dbReference type="PANTHER" id="PTHR19376:SF54">
    <property type="entry name" value="DNA-DIRECTED RNA POLYMERASE SUBUNIT BETA"/>
    <property type="match status" value="1"/>
</dbReference>
<dbReference type="Pfam" id="PF05000">
    <property type="entry name" value="RNA_pol_Rpb1_4"/>
    <property type="match status" value="1"/>
</dbReference>
<dbReference type="Pfam" id="PF04998">
    <property type="entry name" value="RNA_pol_Rpb1_5"/>
    <property type="match status" value="1"/>
</dbReference>
<dbReference type="SUPFAM" id="SSF64484">
    <property type="entry name" value="beta and beta-prime subunits of DNA dependent RNA-polymerase"/>
    <property type="match status" value="1"/>
</dbReference>
<accession>P58132</accession>
<proteinExistence type="inferred from homology"/>
<protein>
    <recommendedName>
        <fullName>DNA-directed RNA polymerase subunit beta''</fullName>
        <ecNumber>2.7.7.6</ecNumber>
    </recommendedName>
    <alternativeName>
        <fullName>PEP</fullName>
    </alternativeName>
    <alternativeName>
        <fullName>Plastid-encoded RNA polymerase subunit beta''</fullName>
        <shortName>RNA polymerase subunit beta''</shortName>
    </alternativeName>
</protein>